<comment type="function">
    <text evidence="1 3">Beta toxins bind voltage-independently at site-4 of sodium channels (Nav) and shift the voltage of activation toward more negative potentials thereby affecting sodium channel activation and promoting spontaneous and repetitive firing (By similarity). Is toxic to both insect and mammals. Induces paralysis in Acheta domestica crickets, but does not induce death, whereas intracerebroventricular injection into mice causes immediate death (at a dose of 0.05 ug/g).</text>
</comment>
<comment type="subcellular location">
    <subcellularLocation>
        <location>Secreted</location>
    </subcellularLocation>
</comment>
<comment type="tissue specificity">
    <text>Expressed by the venom gland.</text>
</comment>
<comment type="domain">
    <text evidence="4">Has the structural arrangement of an alpha-helix connected to antiparallel beta-sheets by disulfide bonds (CS-alpha/beta).</text>
</comment>
<comment type="mass spectrometry">
    <text>Monoisotopic mass.</text>
</comment>
<comment type="similarity">
    <text evidence="4">Belongs to the long (4 C-C) scorpion toxin superfamily. Sodium channel inhibitor family. Beta subfamily.</text>
</comment>
<keyword id="KW-0903">Direct protein sequencing</keyword>
<keyword id="KW-1015">Disulfide bond</keyword>
<keyword id="KW-0872">Ion channel impairing toxin</keyword>
<keyword id="KW-0528">Neurotoxin</keyword>
<keyword id="KW-0964">Secreted</keyword>
<keyword id="KW-0800">Toxin</keyword>
<keyword id="KW-0738">Voltage-gated sodium channel impairing toxin</keyword>
<evidence type="ECO:0000250" key="1"/>
<evidence type="ECO:0000255" key="2">
    <source>
        <dbReference type="PROSITE-ProRule" id="PRU01210"/>
    </source>
</evidence>
<evidence type="ECO:0000269" key="3">
    <source>
    </source>
</evidence>
<evidence type="ECO:0000305" key="4"/>
<protein>
    <recommendedName>
        <fullName>Beta-toxin Im-2</fullName>
    </recommendedName>
</protein>
<sequence>KDGYPMVRAGREKGCKIWCVINNESCDSECKIRKGKKGYCYFWKLACYCEGLPANEQVWTYEKNTCKP</sequence>
<organism>
    <name type="scientific">Isometrus maculatus</name>
    <name type="common">Lesser brown scorpion</name>
    <name type="synonym">Scorpio maculatus</name>
    <dbReference type="NCBI Taxonomy" id="497827"/>
    <lineage>
        <taxon>Eukaryota</taxon>
        <taxon>Metazoa</taxon>
        <taxon>Ecdysozoa</taxon>
        <taxon>Arthropoda</taxon>
        <taxon>Chelicerata</taxon>
        <taxon>Arachnida</taxon>
        <taxon>Scorpiones</taxon>
        <taxon>Buthida</taxon>
        <taxon>Buthoidea</taxon>
        <taxon>Buthidae</taxon>
        <taxon>Isometrus</taxon>
    </lineage>
</organism>
<dbReference type="SMR" id="P0DJK8"/>
<dbReference type="GO" id="GO:0005576">
    <property type="term" value="C:extracellular region"/>
    <property type="evidence" value="ECO:0007669"/>
    <property type="project" value="UniProtKB-SubCell"/>
</dbReference>
<dbReference type="GO" id="GO:0019871">
    <property type="term" value="F:sodium channel inhibitor activity"/>
    <property type="evidence" value="ECO:0007669"/>
    <property type="project" value="InterPro"/>
</dbReference>
<dbReference type="GO" id="GO:0090729">
    <property type="term" value="F:toxin activity"/>
    <property type="evidence" value="ECO:0007669"/>
    <property type="project" value="UniProtKB-KW"/>
</dbReference>
<dbReference type="GO" id="GO:0006952">
    <property type="term" value="P:defense response"/>
    <property type="evidence" value="ECO:0007669"/>
    <property type="project" value="InterPro"/>
</dbReference>
<dbReference type="CDD" id="cd23106">
    <property type="entry name" value="neurotoxins_LC_scorpion"/>
    <property type="match status" value="1"/>
</dbReference>
<dbReference type="Gene3D" id="3.30.30.10">
    <property type="entry name" value="Knottin, scorpion toxin-like"/>
    <property type="match status" value="1"/>
</dbReference>
<dbReference type="InterPro" id="IPR044062">
    <property type="entry name" value="LCN-type_CS_alpha_beta_dom"/>
</dbReference>
<dbReference type="InterPro" id="IPR003614">
    <property type="entry name" value="Scorpion_toxin-like"/>
</dbReference>
<dbReference type="InterPro" id="IPR036574">
    <property type="entry name" value="Scorpion_toxin-like_sf"/>
</dbReference>
<dbReference type="InterPro" id="IPR018218">
    <property type="entry name" value="Scorpion_toxinL"/>
</dbReference>
<dbReference type="InterPro" id="IPR002061">
    <property type="entry name" value="Scorpion_toxinL/defensin"/>
</dbReference>
<dbReference type="Pfam" id="PF00537">
    <property type="entry name" value="Toxin_3"/>
    <property type="match status" value="1"/>
</dbReference>
<dbReference type="PRINTS" id="PR00285">
    <property type="entry name" value="SCORPNTOXIN"/>
</dbReference>
<dbReference type="SMART" id="SM00505">
    <property type="entry name" value="Knot1"/>
    <property type="match status" value="1"/>
</dbReference>
<dbReference type="SUPFAM" id="SSF57095">
    <property type="entry name" value="Scorpion toxin-like"/>
    <property type="match status" value="1"/>
</dbReference>
<dbReference type="PROSITE" id="PS51863">
    <property type="entry name" value="LCN_CSAB"/>
    <property type="match status" value="1"/>
</dbReference>
<name>SCX2_ISOMC</name>
<reference key="1">
    <citation type="journal article" date="2012" name="Biosci. Biotechnol. Biochem.">
        <title>Isolation and characterization of a novel non-selective beta-toxin from the venom of the scorpion Isometrus maculatus.</title>
        <authorList>
            <person name="Ichiki Y."/>
            <person name="Kawachi T."/>
            <person name="Miyashita M."/>
            <person name="Nakagawa Y."/>
            <person name="Miyagawa H."/>
        </authorList>
    </citation>
    <scope>PROTEIN SEQUENCE</scope>
    <scope>FUNCTION</scope>
    <scope>BIOASSAY</scope>
    <scope>MASS SPECTROMETRY</scope>
    <source>
        <strain>Ishigaki Island</strain>
        <tissue>Venom</tissue>
    </source>
</reference>
<proteinExistence type="evidence at protein level"/>
<accession>P0DJK8</accession>
<feature type="chain" id="PRO_0000422067" description="Beta-toxin Im-2">
    <location>
        <begin position="1"/>
        <end position="68"/>
    </location>
</feature>
<feature type="domain" description="LCN-type CS-alpha/beta" evidence="2">
    <location>
        <begin position="1"/>
        <end position="67"/>
    </location>
</feature>
<feature type="disulfide bond" evidence="2">
    <location>
        <begin position="15"/>
        <end position="66"/>
    </location>
</feature>
<feature type="disulfide bond" evidence="2">
    <location>
        <begin position="19"/>
        <end position="40"/>
    </location>
</feature>
<feature type="disulfide bond" evidence="2">
    <location>
        <begin position="26"/>
        <end position="47"/>
    </location>
</feature>
<feature type="disulfide bond" evidence="2">
    <location>
        <begin position="30"/>
        <end position="49"/>
    </location>
</feature>